<feature type="chain" id="PRO_0000391555" description="CASP-like protein 1E1">
    <location>
        <begin position="1"/>
        <end position="188"/>
    </location>
</feature>
<feature type="topological domain" description="Cytoplasmic" evidence="2">
    <location>
        <begin position="1"/>
        <end position="23"/>
    </location>
</feature>
<feature type="transmembrane region" description="Helical" evidence="2">
    <location>
        <begin position="24"/>
        <end position="44"/>
    </location>
</feature>
<feature type="topological domain" description="Extracellular" evidence="2">
    <location>
        <begin position="45"/>
        <end position="78"/>
    </location>
</feature>
<feature type="transmembrane region" description="Helical" evidence="2">
    <location>
        <begin position="79"/>
        <end position="99"/>
    </location>
</feature>
<feature type="topological domain" description="Cytoplasmic" evidence="2">
    <location>
        <begin position="100"/>
        <end position="116"/>
    </location>
</feature>
<feature type="transmembrane region" description="Helical" evidence="2">
    <location>
        <begin position="117"/>
        <end position="137"/>
    </location>
</feature>
<feature type="topological domain" description="Extracellular" evidence="2">
    <location>
        <begin position="138"/>
        <end position="161"/>
    </location>
</feature>
<feature type="transmembrane region" description="Helical" evidence="2">
    <location>
        <begin position="162"/>
        <end position="182"/>
    </location>
</feature>
<feature type="topological domain" description="Cytoplasmic" evidence="2">
    <location>
        <begin position="183"/>
        <end position="188"/>
    </location>
</feature>
<accession>C6TBD0</accession>
<sequence length="188" mass="20187">MEGVESKEREVMVAKPVAVVGVCDLLLRLLAFTVTLVAAIVIAVDKQTKLVPIQLSDSFPPLNVPLTAKWHQMSAFVYFLVTNAIACTYAAMSLLLALVNRGKSKGLWTLIAVLDTFMVALLFSGNGAAAAVGILGYKGNSHVNWNKVCNVFGKFCDQMAASIGVSLIGSLAFLLLVVIPVVRLHRRT</sequence>
<comment type="subunit">
    <text evidence="1">Homodimer and heterodimers.</text>
</comment>
<comment type="subcellular location">
    <subcellularLocation>
        <location evidence="1">Cell membrane</location>
        <topology evidence="1">Multi-pass membrane protein</topology>
    </subcellularLocation>
</comment>
<comment type="similarity">
    <text evidence="3">Belongs to the Casparian strip membrane proteins (CASP) family.</text>
</comment>
<keyword id="KW-1003">Cell membrane</keyword>
<keyword id="KW-0472">Membrane</keyword>
<keyword id="KW-1185">Reference proteome</keyword>
<keyword id="KW-0812">Transmembrane</keyword>
<keyword id="KW-1133">Transmembrane helix</keyword>
<dbReference type="EMBL" id="BT094835">
    <property type="protein sequence ID" value="ACU19132.1"/>
    <property type="molecule type" value="mRNA"/>
</dbReference>
<dbReference type="RefSeq" id="NP_001239666.1">
    <property type="nucleotide sequence ID" value="NM_001252737.2"/>
</dbReference>
<dbReference type="SMR" id="C6TBD0"/>
<dbReference type="FunCoup" id="C6TBD0">
    <property type="interactions" value="710"/>
</dbReference>
<dbReference type="STRING" id="3847.C6TBD0"/>
<dbReference type="PaxDb" id="3847-GLYMA07G38090.1"/>
<dbReference type="EnsemblPlants" id="KRH50920">
    <property type="protein sequence ID" value="KRH50920"/>
    <property type="gene ID" value="GLYMA_07G251200"/>
</dbReference>
<dbReference type="GeneID" id="100793096"/>
<dbReference type="Gramene" id="KRH50920">
    <property type="protein sequence ID" value="KRH50920"/>
    <property type="gene ID" value="GLYMA_07G251200"/>
</dbReference>
<dbReference type="KEGG" id="gmx:100793096"/>
<dbReference type="eggNOG" id="ENOG502RZNK">
    <property type="taxonomic scope" value="Eukaryota"/>
</dbReference>
<dbReference type="HOGENOM" id="CLU_066104_1_1_1"/>
<dbReference type="InParanoid" id="C6TBD0"/>
<dbReference type="OMA" id="IACTHTA"/>
<dbReference type="OrthoDB" id="1898688at2759"/>
<dbReference type="Proteomes" id="UP000008827">
    <property type="component" value="Chromosome 7"/>
</dbReference>
<dbReference type="GO" id="GO:0005886">
    <property type="term" value="C:plasma membrane"/>
    <property type="evidence" value="ECO:0000318"/>
    <property type="project" value="GO_Central"/>
</dbReference>
<dbReference type="InterPro" id="IPR006459">
    <property type="entry name" value="CASP/CASPL"/>
</dbReference>
<dbReference type="InterPro" id="IPR006702">
    <property type="entry name" value="CASP_dom"/>
</dbReference>
<dbReference type="InterPro" id="IPR044173">
    <property type="entry name" value="CASPL"/>
</dbReference>
<dbReference type="NCBIfam" id="TIGR01569">
    <property type="entry name" value="A_tha_TIGR01569"/>
    <property type="match status" value="1"/>
</dbReference>
<dbReference type="PANTHER" id="PTHR36488">
    <property type="entry name" value="CASP-LIKE PROTEIN 1U1"/>
    <property type="match status" value="1"/>
</dbReference>
<dbReference type="PANTHER" id="PTHR36488:SF8">
    <property type="entry name" value="CASP-LIKE PROTEIN 1U1"/>
    <property type="match status" value="1"/>
</dbReference>
<dbReference type="Pfam" id="PF04535">
    <property type="entry name" value="CASP_dom"/>
    <property type="match status" value="1"/>
</dbReference>
<protein>
    <recommendedName>
        <fullName>CASP-like protein 1E1</fullName>
        <shortName>GmCASPL1E1</shortName>
    </recommendedName>
</protein>
<evidence type="ECO:0000250" key="1"/>
<evidence type="ECO:0000255" key="2"/>
<evidence type="ECO:0000305" key="3"/>
<reference key="1">
    <citation type="submission" date="2009-08" db="EMBL/GenBank/DDBJ databases">
        <authorList>
            <person name="Cheung F."/>
            <person name="Xiao Y."/>
            <person name="Chan A."/>
            <person name="Moskal W."/>
            <person name="Town C.D."/>
        </authorList>
    </citation>
    <scope>NUCLEOTIDE SEQUENCE [LARGE SCALE MRNA]</scope>
</reference>
<reference key="2">
    <citation type="journal article" date="2014" name="Plant Physiol.">
        <title>Functional and evolutionary analysis of the CASPARIAN STRIP MEMBRANE DOMAIN PROTEIN family.</title>
        <authorList>
            <person name="Roppolo D."/>
            <person name="Boeckmann B."/>
            <person name="Pfister A."/>
            <person name="Boutet E."/>
            <person name="Rubio M.C."/>
            <person name="Denervaud-Tendon V."/>
            <person name="Vermeer J.E."/>
            <person name="Gheyselinck J."/>
            <person name="Xenarios I."/>
            <person name="Geldner N."/>
        </authorList>
    </citation>
    <scope>GENE FAMILY</scope>
    <scope>NOMENCLATURE</scope>
</reference>
<name>CSPL6_SOYBN</name>
<organism>
    <name type="scientific">Glycine max</name>
    <name type="common">Soybean</name>
    <name type="synonym">Glycine hispida</name>
    <dbReference type="NCBI Taxonomy" id="3847"/>
    <lineage>
        <taxon>Eukaryota</taxon>
        <taxon>Viridiplantae</taxon>
        <taxon>Streptophyta</taxon>
        <taxon>Embryophyta</taxon>
        <taxon>Tracheophyta</taxon>
        <taxon>Spermatophyta</taxon>
        <taxon>Magnoliopsida</taxon>
        <taxon>eudicotyledons</taxon>
        <taxon>Gunneridae</taxon>
        <taxon>Pentapetalae</taxon>
        <taxon>rosids</taxon>
        <taxon>fabids</taxon>
        <taxon>Fabales</taxon>
        <taxon>Fabaceae</taxon>
        <taxon>Papilionoideae</taxon>
        <taxon>50 kb inversion clade</taxon>
        <taxon>NPAAA clade</taxon>
        <taxon>indigoferoid/millettioid clade</taxon>
        <taxon>Phaseoleae</taxon>
        <taxon>Glycine</taxon>
        <taxon>Glycine subgen. Soja</taxon>
    </lineage>
</organism>
<proteinExistence type="evidence at transcript level"/>